<gene>
    <name evidence="1" type="primary">hisB</name>
    <name type="ordered locus">Pden_1883</name>
</gene>
<proteinExistence type="inferred from homology"/>
<sequence>MRRAKITRETAETQIEVELDLDGTGRYDNRTGVGFFDHMLDQLARHSLIDLTVRAKGDLHIDDHHTVEDTGIAIGQALTQALGDKRGIRRYGSFHLAMDDALVRAALDLSARPYLVWNVDFPAQKIGTFDTELVREFFQALSTHGGITLHVDRIHGLNAHHIAEAAFKAVARAMREAVEPDPRMAGVLPSTKGAL</sequence>
<reference key="1">
    <citation type="submission" date="2006-12" db="EMBL/GenBank/DDBJ databases">
        <title>Complete sequence of chromosome 1 of Paracoccus denitrificans PD1222.</title>
        <authorList>
            <person name="Copeland A."/>
            <person name="Lucas S."/>
            <person name="Lapidus A."/>
            <person name="Barry K."/>
            <person name="Detter J.C."/>
            <person name="Glavina del Rio T."/>
            <person name="Hammon N."/>
            <person name="Israni S."/>
            <person name="Dalin E."/>
            <person name="Tice H."/>
            <person name="Pitluck S."/>
            <person name="Munk A.C."/>
            <person name="Brettin T."/>
            <person name="Bruce D."/>
            <person name="Han C."/>
            <person name="Tapia R."/>
            <person name="Gilna P."/>
            <person name="Schmutz J."/>
            <person name="Larimer F."/>
            <person name="Land M."/>
            <person name="Hauser L."/>
            <person name="Kyrpides N."/>
            <person name="Lykidis A."/>
            <person name="Spiro S."/>
            <person name="Richardson D.J."/>
            <person name="Moir J.W.B."/>
            <person name="Ferguson S.J."/>
            <person name="van Spanning R.J.M."/>
            <person name="Richardson P."/>
        </authorList>
    </citation>
    <scope>NUCLEOTIDE SEQUENCE [LARGE SCALE GENOMIC DNA]</scope>
    <source>
        <strain>Pd 1222</strain>
    </source>
</reference>
<dbReference type="EC" id="4.2.1.19" evidence="1"/>
<dbReference type="EMBL" id="CP000489">
    <property type="protein sequence ID" value="ABL69978.1"/>
    <property type="molecule type" value="Genomic_DNA"/>
</dbReference>
<dbReference type="RefSeq" id="WP_011748175.1">
    <property type="nucleotide sequence ID" value="NC_008686.1"/>
</dbReference>
<dbReference type="SMR" id="A1B384"/>
<dbReference type="STRING" id="318586.Pden_1883"/>
<dbReference type="EnsemblBacteria" id="ABL69978">
    <property type="protein sequence ID" value="ABL69978"/>
    <property type="gene ID" value="Pden_1883"/>
</dbReference>
<dbReference type="GeneID" id="93450281"/>
<dbReference type="KEGG" id="pde:Pden_1883"/>
<dbReference type="eggNOG" id="COG0131">
    <property type="taxonomic scope" value="Bacteria"/>
</dbReference>
<dbReference type="HOGENOM" id="CLU_044308_2_0_5"/>
<dbReference type="OrthoDB" id="9813612at2"/>
<dbReference type="UniPathway" id="UPA00031">
    <property type="reaction ID" value="UER00011"/>
</dbReference>
<dbReference type="Proteomes" id="UP000000361">
    <property type="component" value="Chromosome 1"/>
</dbReference>
<dbReference type="GO" id="GO:0005737">
    <property type="term" value="C:cytoplasm"/>
    <property type="evidence" value="ECO:0007669"/>
    <property type="project" value="UniProtKB-SubCell"/>
</dbReference>
<dbReference type="GO" id="GO:0004424">
    <property type="term" value="F:imidazoleglycerol-phosphate dehydratase activity"/>
    <property type="evidence" value="ECO:0007669"/>
    <property type="project" value="UniProtKB-UniRule"/>
</dbReference>
<dbReference type="GO" id="GO:0000105">
    <property type="term" value="P:L-histidine biosynthetic process"/>
    <property type="evidence" value="ECO:0007669"/>
    <property type="project" value="UniProtKB-UniRule"/>
</dbReference>
<dbReference type="CDD" id="cd07914">
    <property type="entry name" value="IGPD"/>
    <property type="match status" value="1"/>
</dbReference>
<dbReference type="FunFam" id="3.30.230.40:FF:000001">
    <property type="entry name" value="Imidazoleglycerol-phosphate dehydratase HisB"/>
    <property type="match status" value="1"/>
</dbReference>
<dbReference type="FunFam" id="3.30.230.40:FF:000003">
    <property type="entry name" value="Imidazoleglycerol-phosphate dehydratase HisB"/>
    <property type="match status" value="1"/>
</dbReference>
<dbReference type="Gene3D" id="3.30.230.40">
    <property type="entry name" value="Imidazole glycerol phosphate dehydratase, domain 1"/>
    <property type="match status" value="2"/>
</dbReference>
<dbReference type="HAMAP" id="MF_00076">
    <property type="entry name" value="HisB"/>
    <property type="match status" value="1"/>
</dbReference>
<dbReference type="InterPro" id="IPR038494">
    <property type="entry name" value="IGPD_sf"/>
</dbReference>
<dbReference type="InterPro" id="IPR000807">
    <property type="entry name" value="ImidazoleglycerolP_deHydtase"/>
</dbReference>
<dbReference type="InterPro" id="IPR020565">
    <property type="entry name" value="ImidazoleglycerP_deHydtase_CS"/>
</dbReference>
<dbReference type="InterPro" id="IPR020568">
    <property type="entry name" value="Ribosomal_Su5_D2-typ_SF"/>
</dbReference>
<dbReference type="NCBIfam" id="NF002109">
    <property type="entry name" value="PRK00951.1-5"/>
    <property type="match status" value="1"/>
</dbReference>
<dbReference type="NCBIfam" id="NF002110">
    <property type="entry name" value="PRK00951.1-6"/>
    <property type="match status" value="1"/>
</dbReference>
<dbReference type="NCBIfam" id="NF002111">
    <property type="entry name" value="PRK00951.2-1"/>
    <property type="match status" value="1"/>
</dbReference>
<dbReference type="NCBIfam" id="NF002114">
    <property type="entry name" value="PRK00951.2-4"/>
    <property type="match status" value="1"/>
</dbReference>
<dbReference type="PANTHER" id="PTHR23133:SF2">
    <property type="entry name" value="IMIDAZOLEGLYCEROL-PHOSPHATE DEHYDRATASE"/>
    <property type="match status" value="1"/>
</dbReference>
<dbReference type="PANTHER" id="PTHR23133">
    <property type="entry name" value="IMIDAZOLEGLYCEROL-PHOSPHATE DEHYDRATASE HIS7"/>
    <property type="match status" value="1"/>
</dbReference>
<dbReference type="Pfam" id="PF00475">
    <property type="entry name" value="IGPD"/>
    <property type="match status" value="1"/>
</dbReference>
<dbReference type="SUPFAM" id="SSF54211">
    <property type="entry name" value="Ribosomal protein S5 domain 2-like"/>
    <property type="match status" value="2"/>
</dbReference>
<dbReference type="PROSITE" id="PS00954">
    <property type="entry name" value="IGP_DEHYDRATASE_1"/>
    <property type="match status" value="1"/>
</dbReference>
<dbReference type="PROSITE" id="PS00955">
    <property type="entry name" value="IGP_DEHYDRATASE_2"/>
    <property type="match status" value="1"/>
</dbReference>
<organism>
    <name type="scientific">Paracoccus denitrificans (strain Pd 1222)</name>
    <dbReference type="NCBI Taxonomy" id="318586"/>
    <lineage>
        <taxon>Bacteria</taxon>
        <taxon>Pseudomonadati</taxon>
        <taxon>Pseudomonadota</taxon>
        <taxon>Alphaproteobacteria</taxon>
        <taxon>Rhodobacterales</taxon>
        <taxon>Paracoccaceae</taxon>
        <taxon>Paracoccus</taxon>
    </lineage>
</organism>
<accession>A1B384</accession>
<name>HIS7_PARDP</name>
<keyword id="KW-0028">Amino-acid biosynthesis</keyword>
<keyword id="KW-0963">Cytoplasm</keyword>
<keyword id="KW-0368">Histidine biosynthesis</keyword>
<keyword id="KW-0456">Lyase</keyword>
<keyword id="KW-1185">Reference proteome</keyword>
<comment type="catalytic activity">
    <reaction evidence="1">
        <text>D-erythro-1-(imidazol-4-yl)glycerol 3-phosphate = 3-(imidazol-4-yl)-2-oxopropyl phosphate + H2O</text>
        <dbReference type="Rhea" id="RHEA:11040"/>
        <dbReference type="ChEBI" id="CHEBI:15377"/>
        <dbReference type="ChEBI" id="CHEBI:57766"/>
        <dbReference type="ChEBI" id="CHEBI:58278"/>
        <dbReference type="EC" id="4.2.1.19"/>
    </reaction>
</comment>
<comment type="pathway">
    <text evidence="1">Amino-acid biosynthesis; L-histidine biosynthesis; L-histidine from 5-phospho-alpha-D-ribose 1-diphosphate: step 6/9.</text>
</comment>
<comment type="subcellular location">
    <subcellularLocation>
        <location evidence="1">Cytoplasm</location>
    </subcellularLocation>
</comment>
<comment type="similarity">
    <text evidence="1">Belongs to the imidazoleglycerol-phosphate dehydratase family.</text>
</comment>
<protein>
    <recommendedName>
        <fullName evidence="1">Imidazoleglycerol-phosphate dehydratase</fullName>
        <shortName evidence="1">IGPD</shortName>
        <ecNumber evidence="1">4.2.1.19</ecNumber>
    </recommendedName>
</protein>
<evidence type="ECO:0000255" key="1">
    <source>
        <dbReference type="HAMAP-Rule" id="MF_00076"/>
    </source>
</evidence>
<feature type="chain" id="PRO_1000010318" description="Imidazoleglycerol-phosphate dehydratase">
    <location>
        <begin position="1"/>
        <end position="195"/>
    </location>
</feature>